<protein>
    <recommendedName>
        <fullName>Thiamine biosynthesis bifunctional protein ThiM/ThiE</fullName>
    </recommendedName>
    <domain>
        <recommendedName>
            <fullName>Hydroxyethylthiazole kinase</fullName>
            <ecNumber evidence="2">2.7.1.50</ecNumber>
        </recommendedName>
        <alternativeName>
            <fullName>4-methyl-5-beta-hydroxyethylthiazole kinase</fullName>
            <shortName>TH kinase</shortName>
            <shortName>Thz kinase</shortName>
        </alternativeName>
    </domain>
    <domain>
        <recommendedName>
            <fullName>Thiamine-phosphate synthase</fullName>
            <shortName>TMP-PPase</shortName>
            <shortName>TP synthase</shortName>
            <shortName>TPS</shortName>
            <ecNumber evidence="3">2.5.1.3</ecNumber>
        </recommendedName>
        <alternativeName>
            <fullName>Thiamine-phosphate pyrophosphorylase</fullName>
            <shortName>TMP pyrophosphorylase</shortName>
        </alternativeName>
    </domain>
</protein>
<gene>
    <name type="primary">thiM/thiE</name>
    <name type="ordered locus">STH157</name>
</gene>
<reference key="1">
    <citation type="journal article" date="2004" name="Nucleic Acids Res.">
        <title>Genome sequence of Symbiobacterium thermophilum, an uncultivable bacterium that depends on microbial commensalism.</title>
        <authorList>
            <person name="Ueda K."/>
            <person name="Yamashita A."/>
            <person name="Ishikawa J."/>
            <person name="Shimada M."/>
            <person name="Watsuji T."/>
            <person name="Morimura K."/>
            <person name="Ikeda H."/>
            <person name="Hattori M."/>
            <person name="Beppu T."/>
        </authorList>
    </citation>
    <scope>NUCLEOTIDE SEQUENCE [LARGE SCALE GENOMIC DNA]</scope>
    <source>
        <strain>DSM 24528 / JCM 14929 / IAM 14863 / T</strain>
    </source>
</reference>
<organism>
    <name type="scientific">Symbiobacterium thermophilum (strain DSM 24528 / JCM 14929 / IAM 14863 / T)</name>
    <dbReference type="NCBI Taxonomy" id="292459"/>
    <lineage>
        <taxon>Bacteria</taxon>
        <taxon>Bacillati</taxon>
        <taxon>Bacillota</taxon>
        <taxon>Clostridia</taxon>
        <taxon>Eubacteriales</taxon>
        <taxon>Symbiobacteriaceae</taxon>
        <taxon>Symbiobacterium</taxon>
    </lineage>
</organism>
<evidence type="ECO:0000250" key="1"/>
<evidence type="ECO:0000250" key="2">
    <source>
        <dbReference type="UniProtKB" id="P39593"/>
    </source>
</evidence>
<evidence type="ECO:0000250" key="3">
    <source>
        <dbReference type="UniProtKB" id="P39594"/>
    </source>
</evidence>
<evidence type="ECO:0000305" key="4"/>
<comment type="function">
    <text evidence="1">Condenses 4-methyl-5-(beta-hydroxyethyl)thiazole monophosphate (THZ-P) and 2-methyl-4-amino-5-hydroxymethyl pyrimidine pyrophosphate (HMP-PP) to form thiamine monophosphate (TMP).</text>
</comment>
<comment type="catalytic activity">
    <reaction evidence="2">
        <text>5-(2-hydroxyethyl)-4-methylthiazole + ATP = 4-methyl-5-(2-phosphooxyethyl)-thiazole + ADP + H(+)</text>
        <dbReference type="Rhea" id="RHEA:24212"/>
        <dbReference type="ChEBI" id="CHEBI:15378"/>
        <dbReference type="ChEBI" id="CHEBI:17957"/>
        <dbReference type="ChEBI" id="CHEBI:30616"/>
        <dbReference type="ChEBI" id="CHEBI:58296"/>
        <dbReference type="ChEBI" id="CHEBI:456216"/>
        <dbReference type="EC" id="2.7.1.50"/>
    </reaction>
</comment>
<comment type="catalytic activity">
    <reaction evidence="3">
        <text>2-[(2R,5Z)-2-carboxy-4-methylthiazol-5(2H)-ylidene]ethyl phosphate + 4-amino-2-methyl-5-(diphosphooxymethyl)pyrimidine + 2 H(+) = thiamine phosphate + CO2 + diphosphate</text>
        <dbReference type="Rhea" id="RHEA:47844"/>
        <dbReference type="ChEBI" id="CHEBI:15378"/>
        <dbReference type="ChEBI" id="CHEBI:16526"/>
        <dbReference type="ChEBI" id="CHEBI:33019"/>
        <dbReference type="ChEBI" id="CHEBI:37575"/>
        <dbReference type="ChEBI" id="CHEBI:57841"/>
        <dbReference type="ChEBI" id="CHEBI:62899"/>
        <dbReference type="EC" id="2.5.1.3"/>
    </reaction>
</comment>
<comment type="catalytic activity">
    <reaction evidence="3">
        <text>2-(2-carboxy-4-methylthiazol-5-yl)ethyl phosphate + 4-amino-2-methyl-5-(diphosphooxymethyl)pyrimidine + 2 H(+) = thiamine phosphate + CO2 + diphosphate</text>
        <dbReference type="Rhea" id="RHEA:47848"/>
        <dbReference type="ChEBI" id="CHEBI:15378"/>
        <dbReference type="ChEBI" id="CHEBI:16526"/>
        <dbReference type="ChEBI" id="CHEBI:33019"/>
        <dbReference type="ChEBI" id="CHEBI:37575"/>
        <dbReference type="ChEBI" id="CHEBI:57841"/>
        <dbReference type="ChEBI" id="CHEBI:62890"/>
        <dbReference type="EC" id="2.5.1.3"/>
    </reaction>
</comment>
<comment type="catalytic activity">
    <reaction evidence="3">
        <text>4-methyl-5-(2-phosphooxyethyl)-thiazole + 4-amino-2-methyl-5-(diphosphooxymethyl)pyrimidine + H(+) = thiamine phosphate + diphosphate</text>
        <dbReference type="Rhea" id="RHEA:22328"/>
        <dbReference type="ChEBI" id="CHEBI:15378"/>
        <dbReference type="ChEBI" id="CHEBI:33019"/>
        <dbReference type="ChEBI" id="CHEBI:37575"/>
        <dbReference type="ChEBI" id="CHEBI:57841"/>
        <dbReference type="ChEBI" id="CHEBI:58296"/>
        <dbReference type="EC" id="2.5.1.3"/>
    </reaction>
</comment>
<comment type="cofactor">
    <cofactor evidence="1">
        <name>Mg(2+)</name>
        <dbReference type="ChEBI" id="CHEBI:18420"/>
    </cofactor>
    <text evidence="1">Binds 1 Mg(2+) ion per subunit.</text>
</comment>
<comment type="pathway">
    <text>Cofactor biosynthesis; thiamine diphosphate biosynthesis; 4-methyl-5-(2-phosphoethyl)-thiazole from 5-(2-hydroxyethyl)-4-methylthiazole: step 1/1.</text>
</comment>
<comment type="pathway">
    <text>Cofactor biosynthesis; thiamine diphosphate biosynthesis; thiamine phosphate from 4-amino-2-methyl-5-diphosphomethylpyrimidine and 4-methyl-5-(2-phosphoethyl)-thiazole: step 1/1.</text>
</comment>
<comment type="similarity">
    <text evidence="4">In the N-terminal section; belongs to the Thz kinase family.</text>
</comment>
<comment type="similarity">
    <text evidence="4">In the C-terminal section; belongs to the thiamine-phosphate synthase family.</text>
</comment>
<keyword id="KW-0067">ATP-binding</keyword>
<keyword id="KW-0418">Kinase</keyword>
<keyword id="KW-0460">Magnesium</keyword>
<keyword id="KW-0479">Metal-binding</keyword>
<keyword id="KW-0511">Multifunctional enzyme</keyword>
<keyword id="KW-0547">Nucleotide-binding</keyword>
<keyword id="KW-1185">Reference proteome</keyword>
<keyword id="KW-0784">Thiamine biosynthesis</keyword>
<keyword id="KW-0808">Transferase</keyword>
<dbReference type="EC" id="2.7.1.50" evidence="2"/>
<dbReference type="EC" id="2.5.1.3" evidence="3"/>
<dbReference type="EMBL" id="AP006840">
    <property type="protein sequence ID" value="BAD39142.1"/>
    <property type="molecule type" value="Genomic_DNA"/>
</dbReference>
<dbReference type="RefSeq" id="WP_011194292.1">
    <property type="nucleotide sequence ID" value="NC_006177.1"/>
</dbReference>
<dbReference type="SMR" id="Q67T51"/>
<dbReference type="STRING" id="292459.STH157"/>
<dbReference type="KEGG" id="sth:STH157"/>
<dbReference type="eggNOG" id="COG0352">
    <property type="taxonomic scope" value="Bacteria"/>
</dbReference>
<dbReference type="eggNOG" id="COG2145">
    <property type="taxonomic scope" value="Bacteria"/>
</dbReference>
<dbReference type="HOGENOM" id="CLU_568500_0_0_9"/>
<dbReference type="OrthoDB" id="9778146at2"/>
<dbReference type="UniPathway" id="UPA00060">
    <property type="reaction ID" value="UER00139"/>
</dbReference>
<dbReference type="UniPathway" id="UPA00060">
    <property type="reaction ID" value="UER00141"/>
</dbReference>
<dbReference type="Proteomes" id="UP000000417">
    <property type="component" value="Chromosome"/>
</dbReference>
<dbReference type="GO" id="GO:0005737">
    <property type="term" value="C:cytoplasm"/>
    <property type="evidence" value="ECO:0007669"/>
    <property type="project" value="TreeGrafter"/>
</dbReference>
<dbReference type="GO" id="GO:0005524">
    <property type="term" value="F:ATP binding"/>
    <property type="evidence" value="ECO:0007669"/>
    <property type="project" value="UniProtKB-UniRule"/>
</dbReference>
<dbReference type="GO" id="GO:0004417">
    <property type="term" value="F:hydroxyethylthiazole kinase activity"/>
    <property type="evidence" value="ECO:0007669"/>
    <property type="project" value="UniProtKB-UniRule"/>
</dbReference>
<dbReference type="GO" id="GO:0000287">
    <property type="term" value="F:magnesium ion binding"/>
    <property type="evidence" value="ECO:0007669"/>
    <property type="project" value="UniProtKB-UniRule"/>
</dbReference>
<dbReference type="GO" id="GO:0004789">
    <property type="term" value="F:thiamine-phosphate diphosphorylase activity"/>
    <property type="evidence" value="ECO:0007669"/>
    <property type="project" value="UniProtKB-UniRule"/>
</dbReference>
<dbReference type="GO" id="GO:0009228">
    <property type="term" value="P:thiamine biosynthetic process"/>
    <property type="evidence" value="ECO:0007669"/>
    <property type="project" value="UniProtKB-KW"/>
</dbReference>
<dbReference type="GO" id="GO:0009229">
    <property type="term" value="P:thiamine diphosphate biosynthetic process"/>
    <property type="evidence" value="ECO:0007669"/>
    <property type="project" value="UniProtKB-UniRule"/>
</dbReference>
<dbReference type="CDD" id="cd01170">
    <property type="entry name" value="THZ_kinase"/>
    <property type="match status" value="1"/>
</dbReference>
<dbReference type="CDD" id="cd00564">
    <property type="entry name" value="TMP_TenI"/>
    <property type="match status" value="1"/>
</dbReference>
<dbReference type="FunFam" id="3.20.20.70:FF:000096">
    <property type="entry name" value="Thiamine-phosphate synthase"/>
    <property type="match status" value="1"/>
</dbReference>
<dbReference type="Gene3D" id="3.40.1190.20">
    <property type="match status" value="1"/>
</dbReference>
<dbReference type="Gene3D" id="3.20.20.70">
    <property type="entry name" value="Aldolase class I"/>
    <property type="match status" value="1"/>
</dbReference>
<dbReference type="HAMAP" id="MF_00228">
    <property type="entry name" value="Thz_kinase"/>
    <property type="match status" value="1"/>
</dbReference>
<dbReference type="HAMAP" id="MF_00097">
    <property type="entry name" value="TMP_synthase"/>
    <property type="match status" value="1"/>
</dbReference>
<dbReference type="InterPro" id="IPR013785">
    <property type="entry name" value="Aldolase_TIM"/>
</dbReference>
<dbReference type="InterPro" id="IPR000417">
    <property type="entry name" value="Hyethyz_kinase"/>
</dbReference>
<dbReference type="InterPro" id="IPR029056">
    <property type="entry name" value="Ribokinase-like"/>
</dbReference>
<dbReference type="InterPro" id="IPR036206">
    <property type="entry name" value="ThiamineP_synth_sf"/>
</dbReference>
<dbReference type="InterPro" id="IPR022998">
    <property type="entry name" value="ThiamineP_synth_TenI"/>
</dbReference>
<dbReference type="InterPro" id="IPR034291">
    <property type="entry name" value="TMP_synthase"/>
</dbReference>
<dbReference type="NCBIfam" id="NF006830">
    <property type="entry name" value="PRK09355.1"/>
    <property type="match status" value="1"/>
</dbReference>
<dbReference type="NCBIfam" id="TIGR00693">
    <property type="entry name" value="thiE"/>
    <property type="match status" value="1"/>
</dbReference>
<dbReference type="PANTHER" id="PTHR20857">
    <property type="entry name" value="THIAMINE-PHOSPHATE PYROPHOSPHORYLASE"/>
    <property type="match status" value="1"/>
</dbReference>
<dbReference type="PANTHER" id="PTHR20857:SF15">
    <property type="entry name" value="THIAMINE-PHOSPHATE SYNTHASE"/>
    <property type="match status" value="1"/>
</dbReference>
<dbReference type="Pfam" id="PF02110">
    <property type="entry name" value="HK"/>
    <property type="match status" value="1"/>
</dbReference>
<dbReference type="Pfam" id="PF02581">
    <property type="entry name" value="TMP-TENI"/>
    <property type="match status" value="1"/>
</dbReference>
<dbReference type="PRINTS" id="PR01099">
    <property type="entry name" value="HYETHTZKNASE"/>
</dbReference>
<dbReference type="SUPFAM" id="SSF53613">
    <property type="entry name" value="Ribokinase-like"/>
    <property type="match status" value="1"/>
</dbReference>
<dbReference type="SUPFAM" id="SSF51391">
    <property type="entry name" value="Thiamin phosphate synthase"/>
    <property type="match status" value="1"/>
</dbReference>
<feature type="chain" id="PRO_0000383912" description="Thiamine biosynthesis bifunctional protein ThiM/ThiE">
    <location>
        <begin position="1"/>
        <end position="480"/>
    </location>
</feature>
<feature type="region of interest" description="Hydroxyethylthiazole kinase">
    <location>
        <begin position="1"/>
        <end position="287"/>
    </location>
</feature>
<feature type="region of interest" description="Thiamine-phosphate synthase">
    <location>
        <begin position="288"/>
        <end position="480"/>
    </location>
</feature>
<feature type="binding site" evidence="1">
    <location>
        <position position="40"/>
    </location>
    <ligand>
        <name>5-(2-hydroxyethyl)-4-methylthiazole</name>
        <dbReference type="ChEBI" id="CHEBI:17957"/>
    </ligand>
</feature>
<feature type="binding site" evidence="1">
    <location>
        <position position="116"/>
    </location>
    <ligand>
        <name>ATP</name>
        <dbReference type="ChEBI" id="CHEBI:30616"/>
    </ligand>
</feature>
<feature type="binding site" evidence="1">
    <location>
        <position position="164"/>
    </location>
    <ligand>
        <name>ATP</name>
        <dbReference type="ChEBI" id="CHEBI:30616"/>
    </ligand>
</feature>
<feature type="binding site" evidence="1">
    <location>
        <position position="191"/>
    </location>
    <ligand>
        <name>5-(2-hydroxyethyl)-4-methylthiazole</name>
        <dbReference type="ChEBI" id="CHEBI:17957"/>
    </ligand>
</feature>
<feature type="binding site" evidence="1">
    <location>
        <begin position="303"/>
        <end position="307"/>
    </location>
    <ligand>
        <name>4-amino-2-methyl-5-(diphosphooxymethyl)pyrimidine</name>
        <dbReference type="ChEBI" id="CHEBI:57841"/>
    </ligand>
</feature>
<feature type="binding site" evidence="1">
    <location>
        <position position="335"/>
    </location>
    <ligand>
        <name>4-amino-2-methyl-5-(diphosphooxymethyl)pyrimidine</name>
        <dbReference type="ChEBI" id="CHEBI:57841"/>
    </ligand>
</feature>
<feature type="binding site" evidence="1">
    <location>
        <position position="336"/>
    </location>
    <ligand>
        <name>Mg(2+)</name>
        <dbReference type="ChEBI" id="CHEBI:18420"/>
    </ligand>
</feature>
<feature type="binding site" evidence="1">
    <location>
        <position position="355"/>
    </location>
    <ligand>
        <name>Mg(2+)</name>
        <dbReference type="ChEBI" id="CHEBI:18420"/>
    </ligand>
</feature>
<feature type="binding site" evidence="1">
    <location>
        <position position="374"/>
    </location>
    <ligand>
        <name>4-amino-2-methyl-5-(diphosphooxymethyl)pyrimidine</name>
        <dbReference type="ChEBI" id="CHEBI:57841"/>
    </ligand>
</feature>
<feature type="binding site" evidence="1">
    <location>
        <begin position="400"/>
        <end position="402"/>
    </location>
    <ligand>
        <name>2-[(2R,5Z)-2-carboxy-4-methylthiazol-5(2H)-ylidene]ethyl phosphate</name>
        <dbReference type="ChEBI" id="CHEBI:62899"/>
    </ligand>
</feature>
<feature type="binding site" evidence="1">
    <location>
        <position position="403"/>
    </location>
    <ligand>
        <name>4-amino-2-methyl-5-(diphosphooxymethyl)pyrimidine</name>
        <dbReference type="ChEBI" id="CHEBI:57841"/>
    </ligand>
</feature>
<feature type="binding site" evidence="1">
    <location>
        <position position="431"/>
    </location>
    <ligand>
        <name>2-[(2R,5Z)-2-carboxy-4-methylthiazol-5(2H)-ylidene]ethyl phosphate</name>
        <dbReference type="ChEBI" id="CHEBI:62899"/>
    </ligand>
</feature>
<feature type="binding site" evidence="1">
    <location>
        <begin position="451"/>
        <end position="452"/>
    </location>
    <ligand>
        <name>2-[(2R,5Z)-2-carboxy-4-methylthiazol-5(2H)-ylidene]ethyl phosphate</name>
        <dbReference type="ChEBI" id="CHEBI:62899"/>
    </ligand>
</feature>
<proteinExistence type="inferred from homology"/>
<name>THIME_SYMTH</name>
<accession>Q67T51</accession>
<sequence>MSTLPERVRERRPLVHAITNCVTMEWVARGLLAAGARPVMARDAAEAPVVAAAADALVLNLGTWSPGLQQAMLEAGQVAARRGIPVVLDPVGAGGTETRTRAALELLERVRVTAVRGNAGEILALAGRDGLVRGVDGPDGRPGPQTERAARAVARRFGCLVAVTGATDLVTDGRRTLAVRAGHPLMSQVPGTGCLATALVAAALAAGTGAGPAGRDRPMEDVDVVAEALLWAGWAGEQAASAASGPGTFAAAFLDRLALRGPLPPGRIAPPLSERLSLYVLVSGATPPDVLEAVLQAGCRMIQFREKRLPLPAQLEAAARVREACRRHGALLVVNDRVDLALAVGADGVHLGQEDLPVAAARRILGPDAVIGATCETAGEARAARDAGADYIGAGPVYVTPSKPDAGEPYGPDVVRRVSEAADLPVVGIGGIGPGRAAPVIAAGAAGVAVISAVLGAPDPGAAARAILDEVRRAKGEVSA</sequence>